<gene>
    <name type="primary">RPL18A</name>
</gene>
<comment type="induction">
    <text>By wounding.</text>
</comment>
<comment type="similarity">
    <text evidence="1">Belongs to the eukaryotic ribosomal protein eL20 family.</text>
</comment>
<protein>
    <recommendedName>
        <fullName evidence="1">Large ribosomal subunit protein eL20</fullName>
    </recommendedName>
    <alternativeName>
        <fullName>60S ribosomal protein L18a</fullName>
    </alternativeName>
</protein>
<sequence>MVTFRFHQYQVVGRGLPSETDEHPKIYRMKLWATNEVRAKSKFWYFLRKLKKVKKSNGQMLAINEIFEKNPTKIKNYGIWLRYQSRTGYHNMYKEYRDTTLNGAVEQMYIEMASRHRVRFPCIQIIKTATIPAKLCKRESSKQFHNSKIKFPLVTRKIRPPSRKLKTHYKASRPNLFM</sequence>
<organism>
    <name type="scientific">Castanea sativa</name>
    <name type="common">Sweet chestnut</name>
    <dbReference type="NCBI Taxonomy" id="21020"/>
    <lineage>
        <taxon>Eukaryota</taxon>
        <taxon>Viridiplantae</taxon>
        <taxon>Streptophyta</taxon>
        <taxon>Embryophyta</taxon>
        <taxon>Tracheophyta</taxon>
        <taxon>Spermatophyta</taxon>
        <taxon>Magnoliopsida</taxon>
        <taxon>eudicotyledons</taxon>
        <taxon>Gunneridae</taxon>
        <taxon>Pentapetalae</taxon>
        <taxon>rosids</taxon>
        <taxon>fabids</taxon>
        <taxon>Fagales</taxon>
        <taxon>Fagaceae</taxon>
        <taxon>Castanea</taxon>
    </lineage>
</organism>
<name>RL18A_CASSA</name>
<dbReference type="EMBL" id="AF334839">
    <property type="protein sequence ID" value="AAK25759.1"/>
    <property type="molecule type" value="mRNA"/>
</dbReference>
<dbReference type="SMR" id="Q9ATF5"/>
<dbReference type="GO" id="GO:1990904">
    <property type="term" value="C:ribonucleoprotein complex"/>
    <property type="evidence" value="ECO:0007669"/>
    <property type="project" value="UniProtKB-KW"/>
</dbReference>
<dbReference type="GO" id="GO:0005840">
    <property type="term" value="C:ribosome"/>
    <property type="evidence" value="ECO:0007669"/>
    <property type="project" value="UniProtKB-KW"/>
</dbReference>
<dbReference type="GO" id="GO:0003735">
    <property type="term" value="F:structural constituent of ribosome"/>
    <property type="evidence" value="ECO:0007669"/>
    <property type="project" value="InterPro"/>
</dbReference>
<dbReference type="GO" id="GO:0006412">
    <property type="term" value="P:translation"/>
    <property type="evidence" value="ECO:0007669"/>
    <property type="project" value="InterPro"/>
</dbReference>
<dbReference type="FunFam" id="3.10.20.10:FF:000001">
    <property type="entry name" value="60S ribosomal protein L18a"/>
    <property type="match status" value="1"/>
</dbReference>
<dbReference type="FunFam" id="3.10.20.10:FF:000002">
    <property type="entry name" value="60S ribosomal protein L18a"/>
    <property type="match status" value="1"/>
</dbReference>
<dbReference type="Gene3D" id="3.10.20.10">
    <property type="match status" value="2"/>
</dbReference>
<dbReference type="HAMAP" id="MF_00273">
    <property type="entry name" value="Ribosomal_eL20"/>
    <property type="match status" value="1"/>
</dbReference>
<dbReference type="InterPro" id="IPR028877">
    <property type="entry name" value="Ribosomal_eL20"/>
</dbReference>
<dbReference type="InterPro" id="IPR023573">
    <property type="entry name" value="Ribosomal_eL20_dom"/>
</dbReference>
<dbReference type="InterPro" id="IPR021138">
    <property type="entry name" value="Ribosomal_eL20_eukaryotes"/>
</dbReference>
<dbReference type="PANTHER" id="PTHR10052">
    <property type="entry name" value="60S RIBOSOMAL PROTEIN L18A"/>
    <property type="match status" value="1"/>
</dbReference>
<dbReference type="Pfam" id="PF01775">
    <property type="entry name" value="Ribosomal_L18A"/>
    <property type="match status" value="1"/>
</dbReference>
<dbReference type="PIRSF" id="PIRSF002190">
    <property type="entry name" value="Ribosomal_L18a"/>
    <property type="match status" value="1"/>
</dbReference>
<dbReference type="SUPFAM" id="SSF160374">
    <property type="entry name" value="RplX-like"/>
    <property type="match status" value="1"/>
</dbReference>
<keyword id="KW-0687">Ribonucleoprotein</keyword>
<keyword id="KW-0689">Ribosomal protein</keyword>
<proteinExistence type="evidence at transcript level"/>
<accession>Q9ATF5</accession>
<reference key="1">
    <citation type="submission" date="2001-01" db="EMBL/GenBank/DDBJ databases">
        <authorList>
            <person name="Schafleitner R."/>
            <person name="Wilhelm E."/>
        </authorList>
    </citation>
    <scope>NUCLEOTIDE SEQUENCE [MRNA]</scope>
    <source>
        <tissue>Stem</tissue>
    </source>
</reference>
<evidence type="ECO:0000305" key="1"/>
<feature type="chain" id="PRO_0000213936" description="Large ribosomal subunit protein eL20">
    <location>
        <begin position="1"/>
        <end position="178"/>
    </location>
</feature>